<evidence type="ECO:0000255" key="1">
    <source>
        <dbReference type="HAMAP-Rule" id="MF_01333"/>
    </source>
</evidence>
<evidence type="ECO:0000305" key="2"/>
<name>RL5_RHIJ3</name>
<gene>
    <name evidence="1" type="primary">rplE</name>
    <name type="ordered locus">RL1786</name>
</gene>
<keyword id="KW-0687">Ribonucleoprotein</keyword>
<keyword id="KW-0689">Ribosomal protein</keyword>
<keyword id="KW-0694">RNA-binding</keyword>
<keyword id="KW-0699">rRNA-binding</keyword>
<keyword id="KW-0820">tRNA-binding</keyword>
<proteinExistence type="inferred from homology"/>
<dbReference type="EMBL" id="AM236080">
    <property type="protein sequence ID" value="CAK07281.1"/>
    <property type="molecule type" value="Genomic_DNA"/>
</dbReference>
<dbReference type="RefSeq" id="WP_003547560.1">
    <property type="nucleotide sequence ID" value="NC_008380.1"/>
</dbReference>
<dbReference type="SMR" id="Q1MIC9"/>
<dbReference type="EnsemblBacteria" id="CAK07281">
    <property type="protein sequence ID" value="CAK07281"/>
    <property type="gene ID" value="RL1786"/>
</dbReference>
<dbReference type="KEGG" id="rle:RL1786"/>
<dbReference type="eggNOG" id="COG0094">
    <property type="taxonomic scope" value="Bacteria"/>
</dbReference>
<dbReference type="HOGENOM" id="CLU_061015_2_1_5"/>
<dbReference type="Proteomes" id="UP000006575">
    <property type="component" value="Chromosome"/>
</dbReference>
<dbReference type="GO" id="GO:1990904">
    <property type="term" value="C:ribonucleoprotein complex"/>
    <property type="evidence" value="ECO:0007669"/>
    <property type="project" value="UniProtKB-KW"/>
</dbReference>
<dbReference type="GO" id="GO:0005840">
    <property type="term" value="C:ribosome"/>
    <property type="evidence" value="ECO:0007669"/>
    <property type="project" value="UniProtKB-KW"/>
</dbReference>
<dbReference type="GO" id="GO:0019843">
    <property type="term" value="F:rRNA binding"/>
    <property type="evidence" value="ECO:0007669"/>
    <property type="project" value="UniProtKB-UniRule"/>
</dbReference>
<dbReference type="GO" id="GO:0003735">
    <property type="term" value="F:structural constituent of ribosome"/>
    <property type="evidence" value="ECO:0007669"/>
    <property type="project" value="InterPro"/>
</dbReference>
<dbReference type="GO" id="GO:0000049">
    <property type="term" value="F:tRNA binding"/>
    <property type="evidence" value="ECO:0007669"/>
    <property type="project" value="UniProtKB-UniRule"/>
</dbReference>
<dbReference type="GO" id="GO:0006412">
    <property type="term" value="P:translation"/>
    <property type="evidence" value="ECO:0007669"/>
    <property type="project" value="UniProtKB-UniRule"/>
</dbReference>
<dbReference type="FunFam" id="3.30.1440.10:FF:000001">
    <property type="entry name" value="50S ribosomal protein L5"/>
    <property type="match status" value="1"/>
</dbReference>
<dbReference type="Gene3D" id="3.30.1440.10">
    <property type="match status" value="1"/>
</dbReference>
<dbReference type="HAMAP" id="MF_01333_B">
    <property type="entry name" value="Ribosomal_uL5_B"/>
    <property type="match status" value="1"/>
</dbReference>
<dbReference type="InterPro" id="IPR002132">
    <property type="entry name" value="Ribosomal_uL5"/>
</dbReference>
<dbReference type="InterPro" id="IPR020930">
    <property type="entry name" value="Ribosomal_uL5_bac-type"/>
</dbReference>
<dbReference type="InterPro" id="IPR031309">
    <property type="entry name" value="Ribosomal_uL5_C"/>
</dbReference>
<dbReference type="InterPro" id="IPR020929">
    <property type="entry name" value="Ribosomal_uL5_CS"/>
</dbReference>
<dbReference type="InterPro" id="IPR022803">
    <property type="entry name" value="Ribosomal_uL5_dom_sf"/>
</dbReference>
<dbReference type="InterPro" id="IPR031310">
    <property type="entry name" value="Ribosomal_uL5_N"/>
</dbReference>
<dbReference type="NCBIfam" id="NF000585">
    <property type="entry name" value="PRK00010.1"/>
    <property type="match status" value="1"/>
</dbReference>
<dbReference type="PANTHER" id="PTHR11994">
    <property type="entry name" value="60S RIBOSOMAL PROTEIN L11-RELATED"/>
    <property type="match status" value="1"/>
</dbReference>
<dbReference type="Pfam" id="PF00281">
    <property type="entry name" value="Ribosomal_L5"/>
    <property type="match status" value="1"/>
</dbReference>
<dbReference type="Pfam" id="PF00673">
    <property type="entry name" value="Ribosomal_L5_C"/>
    <property type="match status" value="1"/>
</dbReference>
<dbReference type="PIRSF" id="PIRSF002161">
    <property type="entry name" value="Ribosomal_L5"/>
    <property type="match status" value="1"/>
</dbReference>
<dbReference type="SUPFAM" id="SSF55282">
    <property type="entry name" value="RL5-like"/>
    <property type="match status" value="1"/>
</dbReference>
<dbReference type="PROSITE" id="PS00358">
    <property type="entry name" value="RIBOSOMAL_L5"/>
    <property type="match status" value="1"/>
</dbReference>
<comment type="function">
    <text evidence="1">This is one of the proteins that bind and probably mediate the attachment of the 5S RNA into the large ribosomal subunit, where it forms part of the central protuberance. In the 70S ribosome it contacts protein S13 of the 30S subunit (bridge B1b), connecting the 2 subunits; this bridge is implicated in subunit movement. Contacts the P site tRNA; the 5S rRNA and some of its associated proteins might help stabilize positioning of ribosome-bound tRNAs.</text>
</comment>
<comment type="subunit">
    <text evidence="1">Part of the 50S ribosomal subunit; part of the 5S rRNA/L5/L18/L25 subcomplex. Contacts the 5S rRNA and the P site tRNA. Forms a bridge to the 30S subunit in the 70S ribosome.</text>
</comment>
<comment type="similarity">
    <text evidence="1">Belongs to the universal ribosomal protein uL5 family.</text>
</comment>
<organism>
    <name type="scientific">Rhizobium johnstonii (strain DSM 114642 / LMG 32736 / 3841)</name>
    <name type="common">Rhizobium leguminosarum bv. viciae</name>
    <dbReference type="NCBI Taxonomy" id="216596"/>
    <lineage>
        <taxon>Bacteria</taxon>
        <taxon>Pseudomonadati</taxon>
        <taxon>Pseudomonadota</taxon>
        <taxon>Alphaproteobacteria</taxon>
        <taxon>Hyphomicrobiales</taxon>
        <taxon>Rhizobiaceae</taxon>
        <taxon>Rhizobium/Agrobacterium group</taxon>
        <taxon>Rhizobium</taxon>
        <taxon>Rhizobium johnstonii</taxon>
    </lineage>
</organism>
<reference key="1">
    <citation type="journal article" date="2006" name="Genome Biol.">
        <title>The genome of Rhizobium leguminosarum has recognizable core and accessory components.</title>
        <authorList>
            <person name="Young J.P.W."/>
            <person name="Crossman L.C."/>
            <person name="Johnston A.W.B."/>
            <person name="Thomson N.R."/>
            <person name="Ghazoui Z.F."/>
            <person name="Hull K.H."/>
            <person name="Wexler M."/>
            <person name="Curson A.R.J."/>
            <person name="Todd J.D."/>
            <person name="Poole P.S."/>
            <person name="Mauchline T.H."/>
            <person name="East A.K."/>
            <person name="Quail M.A."/>
            <person name="Churcher C."/>
            <person name="Arrowsmith C."/>
            <person name="Cherevach I."/>
            <person name="Chillingworth T."/>
            <person name="Clarke K."/>
            <person name="Cronin A."/>
            <person name="Davis P."/>
            <person name="Fraser A."/>
            <person name="Hance Z."/>
            <person name="Hauser H."/>
            <person name="Jagels K."/>
            <person name="Moule S."/>
            <person name="Mungall K."/>
            <person name="Norbertczak H."/>
            <person name="Rabbinowitsch E."/>
            <person name="Sanders M."/>
            <person name="Simmonds M."/>
            <person name="Whitehead S."/>
            <person name="Parkhill J."/>
        </authorList>
    </citation>
    <scope>NUCLEOTIDE SEQUENCE [LARGE SCALE GENOMIC DNA]</scope>
    <source>
        <strain>DSM 114642 / LMG 32736 / 3841</strain>
    </source>
</reference>
<sequence length="185" mass="20965">MAEAKYEPRLKKEYVERIRKALQEQFSYANEMMIPKLDKIVINMGVGEATADSKKPTVAAADLAAIAGQKPVITRARNSIAGFKVREQMPIGAKVTLRGARMYEFMDRLVNIALPRVRDFRGLNPKSFDGRGNFAMGIKEHIVFPEINYDKVDQMWGMDIIVCTTATTDDEARALLKEFSFPFRQ</sequence>
<feature type="chain" id="PRO_1000052807" description="Large ribosomal subunit protein uL5">
    <location>
        <begin position="1"/>
        <end position="185"/>
    </location>
</feature>
<accession>Q1MIC9</accession>
<protein>
    <recommendedName>
        <fullName evidence="1">Large ribosomal subunit protein uL5</fullName>
    </recommendedName>
    <alternativeName>
        <fullName evidence="2">50S ribosomal protein L5</fullName>
    </alternativeName>
</protein>